<organism>
    <name type="scientific">Haemophilus influenzae (strain ATCC 51907 / DSM 11121 / KW20 / Rd)</name>
    <dbReference type="NCBI Taxonomy" id="71421"/>
    <lineage>
        <taxon>Bacteria</taxon>
        <taxon>Pseudomonadati</taxon>
        <taxon>Pseudomonadota</taxon>
        <taxon>Gammaproteobacteria</taxon>
        <taxon>Pasteurellales</taxon>
        <taxon>Pasteurellaceae</taxon>
        <taxon>Haemophilus</taxon>
    </lineage>
</organism>
<sequence length="247" mass="27612">MLELGKLLTALIAPPLNTFVLLIIAAIIYCVHFKKLAKFIAIISFTWLYIMSAPFTGLLLTNNDDSPALTLDEYKQAQAIVILGGGSYQTKELYAETASGAPQLERLRYAAFLQKETGLPILTTGYSLIGISEGDLMAKELNQFFNVPTQWIENKARNTEENASFTKNILIKDHIQKIILVTNQWHMKRAKYLFEKQGFDVLPAAAASYGSKGNLSAKSFIPDLGALNSNMVLLKEWIGYWKAHYVE</sequence>
<feature type="chain" id="PRO_0000078106" description="Uncharacterized protein HI_1701">
    <location>
        <begin position="1"/>
        <end position="247"/>
    </location>
</feature>
<feature type="transmembrane region" description="Helical" evidence="1">
    <location>
        <begin position="11"/>
        <end position="31"/>
    </location>
</feature>
<feature type="transmembrane region" description="Helical" evidence="1">
    <location>
        <begin position="39"/>
        <end position="59"/>
    </location>
</feature>
<dbReference type="EMBL" id="L42023">
    <property type="protein sequence ID" value="AAC23347.1"/>
    <property type="molecule type" value="Genomic_DNA"/>
</dbReference>
<dbReference type="PIR" id="E64040">
    <property type="entry name" value="E64040"/>
</dbReference>
<dbReference type="RefSeq" id="NP_439843.1">
    <property type="nucleotide sequence ID" value="NC_000907.1"/>
</dbReference>
<dbReference type="STRING" id="71421.HI_1701"/>
<dbReference type="EnsemblBacteria" id="AAC23347">
    <property type="protein sequence ID" value="AAC23347"/>
    <property type="gene ID" value="HI_1701"/>
</dbReference>
<dbReference type="KEGG" id="hin:HI_1701"/>
<dbReference type="PATRIC" id="fig|71421.8.peg.1780"/>
<dbReference type="eggNOG" id="COG1434">
    <property type="taxonomic scope" value="Bacteria"/>
</dbReference>
<dbReference type="HOGENOM" id="CLU_053514_3_0_6"/>
<dbReference type="OrthoDB" id="9809813at2"/>
<dbReference type="PhylomeDB" id="P44292"/>
<dbReference type="BioCyc" id="HINF71421:G1GJ1-1717-MONOMER"/>
<dbReference type="Proteomes" id="UP000000579">
    <property type="component" value="Chromosome"/>
</dbReference>
<dbReference type="GO" id="GO:0005886">
    <property type="term" value="C:plasma membrane"/>
    <property type="evidence" value="ECO:0000318"/>
    <property type="project" value="GO_Central"/>
</dbReference>
<dbReference type="GO" id="GO:0043164">
    <property type="term" value="P:Gram-negative-bacterium-type cell wall biogenesis"/>
    <property type="evidence" value="ECO:0000318"/>
    <property type="project" value="GO_Central"/>
</dbReference>
<dbReference type="GO" id="GO:0000270">
    <property type="term" value="P:peptidoglycan metabolic process"/>
    <property type="evidence" value="ECO:0000318"/>
    <property type="project" value="GO_Central"/>
</dbReference>
<dbReference type="CDD" id="cd06259">
    <property type="entry name" value="YdcF-like"/>
    <property type="match status" value="1"/>
</dbReference>
<dbReference type="Gene3D" id="3.40.50.620">
    <property type="entry name" value="HUPs"/>
    <property type="match status" value="1"/>
</dbReference>
<dbReference type="InterPro" id="IPR051599">
    <property type="entry name" value="Cell_Envelope_Assoc"/>
</dbReference>
<dbReference type="InterPro" id="IPR003848">
    <property type="entry name" value="DUF218"/>
</dbReference>
<dbReference type="InterPro" id="IPR014729">
    <property type="entry name" value="Rossmann-like_a/b/a_fold"/>
</dbReference>
<dbReference type="PANTHER" id="PTHR30336:SF4">
    <property type="entry name" value="ENVELOPE BIOGENESIS FACTOR ELYC"/>
    <property type="match status" value="1"/>
</dbReference>
<dbReference type="PANTHER" id="PTHR30336">
    <property type="entry name" value="INNER MEMBRANE PROTEIN, PROBABLE PERMEASE"/>
    <property type="match status" value="1"/>
</dbReference>
<dbReference type="Pfam" id="PF02698">
    <property type="entry name" value="DUF218"/>
    <property type="match status" value="1"/>
</dbReference>
<comment type="subcellular location">
    <subcellularLocation>
        <location evidence="2">Cell membrane</location>
        <topology evidence="2">Multi-pass membrane protein</topology>
    </subcellularLocation>
</comment>
<accession>P44292</accession>
<protein>
    <recommendedName>
        <fullName>Uncharacterized protein HI_1701</fullName>
    </recommendedName>
</protein>
<gene>
    <name type="ordered locus">HI_1701</name>
</gene>
<proteinExistence type="predicted"/>
<reference key="1">
    <citation type="journal article" date="1995" name="Science">
        <title>Whole-genome random sequencing and assembly of Haemophilus influenzae Rd.</title>
        <authorList>
            <person name="Fleischmann R.D."/>
            <person name="Adams M.D."/>
            <person name="White O."/>
            <person name="Clayton R.A."/>
            <person name="Kirkness E.F."/>
            <person name="Kerlavage A.R."/>
            <person name="Bult C.J."/>
            <person name="Tomb J.-F."/>
            <person name="Dougherty B.A."/>
            <person name="Merrick J.M."/>
            <person name="McKenney K."/>
            <person name="Sutton G.G."/>
            <person name="FitzHugh W."/>
            <person name="Fields C.A."/>
            <person name="Gocayne J.D."/>
            <person name="Scott J.D."/>
            <person name="Shirley R."/>
            <person name="Liu L.-I."/>
            <person name="Glodek A."/>
            <person name="Kelley J.M."/>
            <person name="Weidman J.F."/>
            <person name="Phillips C.A."/>
            <person name="Spriggs T."/>
            <person name="Hedblom E."/>
            <person name="Cotton M.D."/>
            <person name="Utterback T.R."/>
            <person name="Hanna M.C."/>
            <person name="Nguyen D.T."/>
            <person name="Saudek D.M."/>
            <person name="Brandon R.C."/>
            <person name="Fine L.D."/>
            <person name="Fritchman J.L."/>
            <person name="Fuhrmann J.L."/>
            <person name="Geoghagen N.S.M."/>
            <person name="Gnehm C.L."/>
            <person name="McDonald L.A."/>
            <person name="Small K.V."/>
            <person name="Fraser C.M."/>
            <person name="Smith H.O."/>
            <person name="Venter J.C."/>
        </authorList>
    </citation>
    <scope>NUCLEOTIDE SEQUENCE [LARGE SCALE GENOMIC DNA]</scope>
    <source>
        <strain>ATCC 51907 / DSM 11121 / KW20 / Rd</strain>
    </source>
</reference>
<evidence type="ECO:0000255" key="1"/>
<evidence type="ECO:0000305" key="2"/>
<name>Y1701_HAEIN</name>
<keyword id="KW-1003">Cell membrane</keyword>
<keyword id="KW-0472">Membrane</keyword>
<keyword id="KW-1185">Reference proteome</keyword>
<keyword id="KW-0812">Transmembrane</keyword>
<keyword id="KW-1133">Transmembrane helix</keyword>